<comment type="function">
    <text evidence="1">Involved in the de novo purine biosynthesis. Catalyzes the transfer of formate to 5-phospho-ribosyl-glycinamide (GAR), producing 5-phospho-ribosyl-N-formylglycinamide (FGAR). Formate is provided by PurU via hydrolysis of 10-formyl-tetrahydrofolate.</text>
</comment>
<comment type="catalytic activity">
    <reaction evidence="1">
        <text>N(1)-(5-phospho-beta-D-ribosyl)glycinamide + formate + ATP = N(2)-formyl-N(1)-(5-phospho-beta-D-ribosyl)glycinamide + ADP + phosphate + H(+)</text>
        <dbReference type="Rhea" id="RHEA:24829"/>
        <dbReference type="ChEBI" id="CHEBI:15378"/>
        <dbReference type="ChEBI" id="CHEBI:15740"/>
        <dbReference type="ChEBI" id="CHEBI:30616"/>
        <dbReference type="ChEBI" id="CHEBI:43474"/>
        <dbReference type="ChEBI" id="CHEBI:143788"/>
        <dbReference type="ChEBI" id="CHEBI:147286"/>
        <dbReference type="ChEBI" id="CHEBI:456216"/>
        <dbReference type="EC" id="6.3.1.21"/>
    </reaction>
    <physiologicalReaction direction="left-to-right" evidence="1">
        <dbReference type="Rhea" id="RHEA:24830"/>
    </physiologicalReaction>
</comment>
<comment type="pathway">
    <text evidence="1">Purine metabolism; IMP biosynthesis via de novo pathway; N(2)-formyl-N(1)-(5-phospho-D-ribosyl)glycinamide from N(1)-(5-phospho-D-ribosyl)glycinamide (formate route): step 1/1.</text>
</comment>
<comment type="subunit">
    <text evidence="1">Homodimer.</text>
</comment>
<comment type="similarity">
    <text evidence="1">Belongs to the PurK/PurT family.</text>
</comment>
<dbReference type="EC" id="6.3.1.21" evidence="1"/>
<dbReference type="EMBL" id="CP000350">
    <property type="protein sequence ID" value="ABJ77349.1"/>
    <property type="molecule type" value="Genomic_DNA"/>
</dbReference>
<dbReference type="RefSeq" id="WP_011669205.1">
    <property type="nucleotide sequence ID" value="NC_008510.1"/>
</dbReference>
<dbReference type="SMR" id="Q04P21"/>
<dbReference type="KEGG" id="lbj:LBJ_2952"/>
<dbReference type="HOGENOM" id="CLU_011534_1_3_12"/>
<dbReference type="UniPathway" id="UPA00074">
    <property type="reaction ID" value="UER00127"/>
</dbReference>
<dbReference type="Proteomes" id="UP000000656">
    <property type="component" value="Chromosome 1"/>
</dbReference>
<dbReference type="GO" id="GO:0005829">
    <property type="term" value="C:cytosol"/>
    <property type="evidence" value="ECO:0007669"/>
    <property type="project" value="TreeGrafter"/>
</dbReference>
<dbReference type="GO" id="GO:0005524">
    <property type="term" value="F:ATP binding"/>
    <property type="evidence" value="ECO:0007669"/>
    <property type="project" value="UniProtKB-UniRule"/>
</dbReference>
<dbReference type="GO" id="GO:0000287">
    <property type="term" value="F:magnesium ion binding"/>
    <property type="evidence" value="ECO:0007669"/>
    <property type="project" value="InterPro"/>
</dbReference>
<dbReference type="GO" id="GO:0043815">
    <property type="term" value="F:phosphoribosylglycinamide formyltransferase 2 activity"/>
    <property type="evidence" value="ECO:0007669"/>
    <property type="project" value="UniProtKB-UniRule"/>
</dbReference>
<dbReference type="GO" id="GO:0004644">
    <property type="term" value="F:phosphoribosylglycinamide formyltransferase activity"/>
    <property type="evidence" value="ECO:0007669"/>
    <property type="project" value="InterPro"/>
</dbReference>
<dbReference type="GO" id="GO:0006189">
    <property type="term" value="P:'de novo' IMP biosynthetic process"/>
    <property type="evidence" value="ECO:0007669"/>
    <property type="project" value="UniProtKB-UniRule"/>
</dbReference>
<dbReference type="FunFam" id="3.30.1490.20:FF:000013">
    <property type="entry name" value="Formate-dependent phosphoribosylglycinamide formyltransferase"/>
    <property type="match status" value="1"/>
</dbReference>
<dbReference type="FunFam" id="3.30.470.20:FF:000035">
    <property type="entry name" value="Formate-dependent phosphoribosylglycinamide formyltransferase"/>
    <property type="match status" value="1"/>
</dbReference>
<dbReference type="FunFam" id="3.40.50.20:FF:000022">
    <property type="entry name" value="Formate-dependent phosphoribosylglycinamide formyltransferase"/>
    <property type="match status" value="1"/>
</dbReference>
<dbReference type="Gene3D" id="3.40.50.20">
    <property type="match status" value="1"/>
</dbReference>
<dbReference type="Gene3D" id="3.30.1490.20">
    <property type="entry name" value="ATP-grasp fold, A domain"/>
    <property type="match status" value="1"/>
</dbReference>
<dbReference type="Gene3D" id="3.30.470.20">
    <property type="entry name" value="ATP-grasp fold, B domain"/>
    <property type="match status" value="1"/>
</dbReference>
<dbReference type="HAMAP" id="MF_01643">
    <property type="entry name" value="PurT"/>
    <property type="match status" value="1"/>
</dbReference>
<dbReference type="InterPro" id="IPR011761">
    <property type="entry name" value="ATP-grasp"/>
</dbReference>
<dbReference type="InterPro" id="IPR003135">
    <property type="entry name" value="ATP-grasp_carboxylate-amine"/>
</dbReference>
<dbReference type="InterPro" id="IPR013815">
    <property type="entry name" value="ATP_grasp_subdomain_1"/>
</dbReference>
<dbReference type="InterPro" id="IPR016185">
    <property type="entry name" value="PreATP-grasp_dom_sf"/>
</dbReference>
<dbReference type="InterPro" id="IPR005862">
    <property type="entry name" value="PurT"/>
</dbReference>
<dbReference type="InterPro" id="IPR054350">
    <property type="entry name" value="PurT/PurK_preATP-grasp"/>
</dbReference>
<dbReference type="InterPro" id="IPR048740">
    <property type="entry name" value="PurT_C"/>
</dbReference>
<dbReference type="InterPro" id="IPR011054">
    <property type="entry name" value="Rudment_hybrid_motif"/>
</dbReference>
<dbReference type="NCBIfam" id="NF006766">
    <property type="entry name" value="PRK09288.1"/>
    <property type="match status" value="1"/>
</dbReference>
<dbReference type="NCBIfam" id="TIGR01142">
    <property type="entry name" value="purT"/>
    <property type="match status" value="1"/>
</dbReference>
<dbReference type="PANTHER" id="PTHR43055">
    <property type="entry name" value="FORMATE-DEPENDENT PHOSPHORIBOSYLGLYCINAMIDE FORMYLTRANSFERASE"/>
    <property type="match status" value="1"/>
</dbReference>
<dbReference type="PANTHER" id="PTHR43055:SF1">
    <property type="entry name" value="FORMATE-DEPENDENT PHOSPHORIBOSYLGLYCINAMIDE FORMYLTRANSFERASE"/>
    <property type="match status" value="1"/>
</dbReference>
<dbReference type="Pfam" id="PF02222">
    <property type="entry name" value="ATP-grasp"/>
    <property type="match status" value="1"/>
</dbReference>
<dbReference type="Pfam" id="PF21244">
    <property type="entry name" value="PurT_C"/>
    <property type="match status" value="1"/>
</dbReference>
<dbReference type="Pfam" id="PF22660">
    <property type="entry name" value="RS_preATP-grasp-like"/>
    <property type="match status" value="1"/>
</dbReference>
<dbReference type="SUPFAM" id="SSF56059">
    <property type="entry name" value="Glutathione synthetase ATP-binding domain-like"/>
    <property type="match status" value="1"/>
</dbReference>
<dbReference type="SUPFAM" id="SSF52440">
    <property type="entry name" value="PreATP-grasp domain"/>
    <property type="match status" value="1"/>
</dbReference>
<dbReference type="SUPFAM" id="SSF51246">
    <property type="entry name" value="Rudiment single hybrid motif"/>
    <property type="match status" value="1"/>
</dbReference>
<dbReference type="PROSITE" id="PS50975">
    <property type="entry name" value="ATP_GRASP"/>
    <property type="match status" value="1"/>
</dbReference>
<accession>Q04P21</accession>
<evidence type="ECO:0000255" key="1">
    <source>
        <dbReference type="HAMAP-Rule" id="MF_01643"/>
    </source>
</evidence>
<sequence>MKKKILLLGSGELGKEFIIAAQRLGQYVIAVDFYDGAPAMQVAHEKEIINMLDGNLLDQVVKKHKPDLIVPEIEAIRTERFYEYEKQGYQIVPSAKAANFTMNRKSIRDLAAKDLKLLTAKYLYASSEKELAKATKILGFPCVVKPLMSSSGKGQSIIKSPKDISKAWEASQTKGRTSATEIIVEEFISFKSEITLLTVTQKNGKTLFCPPIGHRQERGDYQESWQPAEISEVQLKEAQRMAEAVTKELTGFGIWGVEFFLTEDQVYFSELSPRPHDTGMVTLSGTQNFNEFELHIRAILGIPIPEVTQERKGASAVILASTDGKIPEVRGLDIASEMPESDFRIFGKPITRPYRRMGIALSYSTKGEGISSLRKRAILLASKIKVD</sequence>
<name>PURT_LEPBJ</name>
<protein>
    <recommendedName>
        <fullName evidence="1">Formate-dependent phosphoribosylglycinamide formyltransferase</fullName>
        <ecNumber evidence="1">6.3.1.21</ecNumber>
    </recommendedName>
    <alternativeName>
        <fullName evidence="1">5'-phosphoribosylglycinamide transformylase 2</fullName>
    </alternativeName>
    <alternativeName>
        <fullName evidence="1">Formate-dependent GAR transformylase</fullName>
    </alternativeName>
    <alternativeName>
        <fullName evidence="1">GAR transformylase 2</fullName>
        <shortName evidence="1">GART 2</shortName>
    </alternativeName>
    <alternativeName>
        <fullName evidence="1">Non-folate glycinamide ribonucleotide transformylase</fullName>
    </alternativeName>
    <alternativeName>
        <fullName evidence="1">Phosphoribosylglycinamide formyltransferase 2</fullName>
    </alternativeName>
</protein>
<feature type="chain" id="PRO_0000319180" description="Formate-dependent phosphoribosylglycinamide formyltransferase">
    <location>
        <begin position="1"/>
        <end position="387"/>
    </location>
</feature>
<feature type="domain" description="ATP-grasp" evidence="1">
    <location>
        <begin position="109"/>
        <end position="300"/>
    </location>
</feature>
<feature type="binding site" evidence="1">
    <location>
        <begin position="12"/>
        <end position="13"/>
    </location>
    <ligand>
        <name>N(1)-(5-phospho-beta-D-ribosyl)glycinamide</name>
        <dbReference type="ChEBI" id="CHEBI:143788"/>
    </ligand>
</feature>
<feature type="binding site" evidence="1">
    <location>
        <position position="72"/>
    </location>
    <ligand>
        <name>N(1)-(5-phospho-beta-D-ribosyl)glycinamide</name>
        <dbReference type="ChEBI" id="CHEBI:143788"/>
    </ligand>
</feature>
<feature type="binding site" evidence="1">
    <location>
        <position position="104"/>
    </location>
    <ligand>
        <name>ATP</name>
        <dbReference type="ChEBI" id="CHEBI:30616"/>
    </ligand>
</feature>
<feature type="binding site" evidence="1">
    <location>
        <position position="145"/>
    </location>
    <ligand>
        <name>ATP</name>
        <dbReference type="ChEBI" id="CHEBI:30616"/>
    </ligand>
</feature>
<feature type="binding site" evidence="1">
    <location>
        <begin position="150"/>
        <end position="155"/>
    </location>
    <ligand>
        <name>ATP</name>
        <dbReference type="ChEBI" id="CHEBI:30616"/>
    </ligand>
</feature>
<feature type="binding site" evidence="1">
    <location>
        <begin position="185"/>
        <end position="188"/>
    </location>
    <ligand>
        <name>ATP</name>
        <dbReference type="ChEBI" id="CHEBI:30616"/>
    </ligand>
</feature>
<feature type="binding site" evidence="1">
    <location>
        <position position="193"/>
    </location>
    <ligand>
        <name>ATP</name>
        <dbReference type="ChEBI" id="CHEBI:30616"/>
    </ligand>
</feature>
<feature type="binding site" evidence="1">
    <location>
        <position position="258"/>
    </location>
    <ligand>
        <name>Mg(2+)</name>
        <dbReference type="ChEBI" id="CHEBI:18420"/>
    </ligand>
</feature>
<feature type="binding site" evidence="1">
    <location>
        <position position="270"/>
    </location>
    <ligand>
        <name>Mg(2+)</name>
        <dbReference type="ChEBI" id="CHEBI:18420"/>
    </ligand>
</feature>
<feature type="binding site" evidence="1">
    <location>
        <position position="277"/>
    </location>
    <ligand>
        <name>N(1)-(5-phospho-beta-D-ribosyl)glycinamide</name>
        <dbReference type="ChEBI" id="CHEBI:143788"/>
    </ligand>
</feature>
<feature type="binding site" evidence="1">
    <location>
        <position position="348"/>
    </location>
    <ligand>
        <name>N(1)-(5-phospho-beta-D-ribosyl)glycinamide</name>
        <dbReference type="ChEBI" id="CHEBI:143788"/>
    </ligand>
</feature>
<feature type="binding site" evidence="1">
    <location>
        <begin position="355"/>
        <end position="356"/>
    </location>
    <ligand>
        <name>N(1)-(5-phospho-beta-D-ribosyl)glycinamide</name>
        <dbReference type="ChEBI" id="CHEBI:143788"/>
    </ligand>
</feature>
<organism>
    <name type="scientific">Leptospira borgpetersenii serovar Hardjo-bovis (strain JB197)</name>
    <dbReference type="NCBI Taxonomy" id="355277"/>
    <lineage>
        <taxon>Bacteria</taxon>
        <taxon>Pseudomonadati</taxon>
        <taxon>Spirochaetota</taxon>
        <taxon>Spirochaetia</taxon>
        <taxon>Leptospirales</taxon>
        <taxon>Leptospiraceae</taxon>
        <taxon>Leptospira</taxon>
    </lineage>
</organism>
<reference key="1">
    <citation type="journal article" date="2006" name="Proc. Natl. Acad. Sci. U.S.A.">
        <title>Genome reduction in Leptospira borgpetersenii reflects limited transmission potential.</title>
        <authorList>
            <person name="Bulach D.M."/>
            <person name="Zuerner R.L."/>
            <person name="Wilson P."/>
            <person name="Seemann T."/>
            <person name="McGrath A."/>
            <person name="Cullen P.A."/>
            <person name="Davis J."/>
            <person name="Johnson M."/>
            <person name="Kuczek E."/>
            <person name="Alt D.P."/>
            <person name="Peterson-Burch B."/>
            <person name="Coppel R.L."/>
            <person name="Rood J.I."/>
            <person name="Davies J.K."/>
            <person name="Adler B."/>
        </authorList>
    </citation>
    <scope>NUCLEOTIDE SEQUENCE [LARGE SCALE GENOMIC DNA]</scope>
    <source>
        <strain>JB197</strain>
    </source>
</reference>
<gene>
    <name evidence="1" type="primary">purT</name>
    <name type="ordered locus">LBJ_2952</name>
</gene>
<proteinExistence type="inferred from homology"/>
<keyword id="KW-0067">ATP-binding</keyword>
<keyword id="KW-0436">Ligase</keyword>
<keyword id="KW-0460">Magnesium</keyword>
<keyword id="KW-0479">Metal-binding</keyword>
<keyword id="KW-0547">Nucleotide-binding</keyword>
<keyword id="KW-0658">Purine biosynthesis</keyword>